<comment type="function">
    <text evidence="1">RuBisCO catalyzes two reactions: the carboxylation of D-ribulose 1,5-bisphosphate, the primary event in carbon dioxide fixation, as well as the oxidative fragmentation of the pentose substrate in the photorespiration process. Both reactions occur simultaneously and in competition at the same active site.</text>
</comment>
<comment type="catalytic activity">
    <reaction evidence="1">
        <text>2 (2R)-3-phosphoglycerate + 2 H(+) = D-ribulose 1,5-bisphosphate + CO2 + H2O</text>
        <dbReference type="Rhea" id="RHEA:23124"/>
        <dbReference type="ChEBI" id="CHEBI:15377"/>
        <dbReference type="ChEBI" id="CHEBI:15378"/>
        <dbReference type="ChEBI" id="CHEBI:16526"/>
        <dbReference type="ChEBI" id="CHEBI:57870"/>
        <dbReference type="ChEBI" id="CHEBI:58272"/>
        <dbReference type="EC" id="4.1.1.39"/>
    </reaction>
</comment>
<comment type="catalytic activity">
    <reaction evidence="1">
        <text>D-ribulose 1,5-bisphosphate + O2 = 2-phosphoglycolate + (2R)-3-phosphoglycerate + 2 H(+)</text>
        <dbReference type="Rhea" id="RHEA:36631"/>
        <dbReference type="ChEBI" id="CHEBI:15378"/>
        <dbReference type="ChEBI" id="CHEBI:15379"/>
        <dbReference type="ChEBI" id="CHEBI:57870"/>
        <dbReference type="ChEBI" id="CHEBI:58033"/>
        <dbReference type="ChEBI" id="CHEBI:58272"/>
    </reaction>
</comment>
<comment type="cofactor">
    <cofactor evidence="1">
        <name>Mg(2+)</name>
        <dbReference type="ChEBI" id="CHEBI:18420"/>
    </cofactor>
    <text evidence="1">Binds 1 Mg(2+) ion per subunit.</text>
</comment>
<comment type="subunit">
    <text evidence="1">Heterohexadecamer of 8 large chains and 8 small chains; disulfide-linked. The disulfide link is formed within the large subunit homodimers.</text>
</comment>
<comment type="subcellular location">
    <subcellularLocation>
        <location>Plastid</location>
        <location>Chloroplast</location>
    </subcellularLocation>
</comment>
<comment type="PTM">
    <text evidence="1">The disulfide bond which can form in the large chain dimeric partners within the hexadecamer appears to be associated with oxidative stress and protein turnover.</text>
</comment>
<comment type="miscellaneous">
    <text evidence="1">The basic functional RuBisCO is composed of a large chain homodimer in a 'head-to-tail' conformation. In form I RuBisCO this homodimer is arranged in a barrel-like tetramer with the small subunits forming a tetrameric 'cap' on each end of the 'barrel'.</text>
</comment>
<comment type="similarity">
    <text evidence="1">Belongs to the RuBisCO large chain family. Type I subfamily.</text>
</comment>
<evidence type="ECO:0000255" key="1">
    <source>
        <dbReference type="HAMAP-Rule" id="MF_01338"/>
    </source>
</evidence>
<name>RBL_GLAGU</name>
<protein>
    <recommendedName>
        <fullName evidence="1">Ribulose bisphosphate carboxylase large chain</fullName>
        <shortName evidence="1">RuBisCO large subunit</shortName>
        <ecNumber evidence="1">4.1.1.39</ecNumber>
    </recommendedName>
</protein>
<sequence length="458" mass="50745">IASVVFKAGVKDYRLTYYTPEYETKDTDILAAFRVTPQPGVPAEEAGAAVAAESSTGTWTTVWTDGLTNLDRYKGRCYHIEAXVGEENQYIAYVAYPLDLFEEGSVTNMFTSIVGNVFGFKALRALRLEDLRIPTAYSKTFQGPPHGIQVERDKLNKYGRPLLGCTIKPKLGLSAKNYGRAVYECLRGGLDFTKDDENVNSQPFMRWRDRFVFCAEAIYKAQAETGEIKGHYLNATAGTCEEMMKRAAFARELGVPIVMHDYLTGGFTANTTLAHYCRDNGLLLHIHRAMHAVIDRQKNHGMHFRVLAKALRMSGGDHIHAGTVVGKLEGEREMTLGFVDLLRDDYIEKDRSRGIFFTQDWVSMPGVLPVASGGIHVWHMPALTEIFGDDSVLQFGGGTLGHPWGNAPGAVANRVALEACVQARNEGRDLAREGNEIIREACNWSPGLAAACEVWKEI</sequence>
<accession>P93906</accession>
<organism>
    <name type="scientific">Gladiolus gueinzii</name>
    <name type="common">Coastal gladiolus</name>
    <dbReference type="NCBI Taxonomy" id="58993"/>
    <lineage>
        <taxon>Eukaryota</taxon>
        <taxon>Viridiplantae</taxon>
        <taxon>Streptophyta</taxon>
        <taxon>Embryophyta</taxon>
        <taxon>Tracheophyta</taxon>
        <taxon>Spermatophyta</taxon>
        <taxon>Magnoliopsida</taxon>
        <taxon>Liliopsida</taxon>
        <taxon>Asparagales</taxon>
        <taxon>Iridaceae</taxon>
        <taxon>Crocoideae</taxon>
        <taxon>Gladioleae</taxon>
        <taxon>Gladiolus</taxon>
    </lineage>
</organism>
<reference key="1">
    <citation type="submission" date="1996-07" db="EMBL/GenBank/DDBJ databases">
        <authorList>
            <person name="Rudall P.J."/>
            <person name="Furness C.A."/>
            <person name="Fay M.F."/>
            <person name="Chase M.W."/>
        </authorList>
    </citation>
    <scope>NUCLEOTIDE SEQUENCE [GENOMIC DNA]</scope>
    <source>
        <tissue>Leaf</tissue>
    </source>
</reference>
<gene>
    <name evidence="1" type="primary">rbcL</name>
</gene>
<dbReference type="EC" id="4.1.1.39" evidence="1"/>
<dbReference type="EMBL" id="Z77286">
    <property type="protein sequence ID" value="CAB01086.1"/>
    <property type="molecule type" value="Genomic_DNA"/>
</dbReference>
<dbReference type="GO" id="GO:0009507">
    <property type="term" value="C:chloroplast"/>
    <property type="evidence" value="ECO:0007669"/>
    <property type="project" value="UniProtKB-SubCell"/>
</dbReference>
<dbReference type="GO" id="GO:0000287">
    <property type="term" value="F:magnesium ion binding"/>
    <property type="evidence" value="ECO:0007669"/>
    <property type="project" value="InterPro"/>
</dbReference>
<dbReference type="GO" id="GO:0004497">
    <property type="term" value="F:monooxygenase activity"/>
    <property type="evidence" value="ECO:0007669"/>
    <property type="project" value="UniProtKB-KW"/>
</dbReference>
<dbReference type="GO" id="GO:0016984">
    <property type="term" value="F:ribulose-bisphosphate carboxylase activity"/>
    <property type="evidence" value="ECO:0007669"/>
    <property type="project" value="UniProtKB-EC"/>
</dbReference>
<dbReference type="GO" id="GO:0009853">
    <property type="term" value="P:photorespiration"/>
    <property type="evidence" value="ECO:0007669"/>
    <property type="project" value="UniProtKB-KW"/>
</dbReference>
<dbReference type="GO" id="GO:0019253">
    <property type="term" value="P:reductive pentose-phosphate cycle"/>
    <property type="evidence" value="ECO:0007669"/>
    <property type="project" value="UniProtKB-KW"/>
</dbReference>
<dbReference type="CDD" id="cd08212">
    <property type="entry name" value="RuBisCO_large_I"/>
    <property type="match status" value="1"/>
</dbReference>
<dbReference type="FunFam" id="3.20.20.110:FF:000001">
    <property type="entry name" value="Ribulose bisphosphate carboxylase large chain"/>
    <property type="match status" value="1"/>
</dbReference>
<dbReference type="FunFam" id="3.30.70.150:FF:000001">
    <property type="entry name" value="Ribulose bisphosphate carboxylase large chain"/>
    <property type="match status" value="1"/>
</dbReference>
<dbReference type="Gene3D" id="3.20.20.110">
    <property type="entry name" value="Ribulose bisphosphate carboxylase, large subunit, C-terminal domain"/>
    <property type="match status" value="1"/>
</dbReference>
<dbReference type="Gene3D" id="3.30.70.150">
    <property type="entry name" value="RuBisCO large subunit, N-terminal domain"/>
    <property type="match status" value="1"/>
</dbReference>
<dbReference type="HAMAP" id="MF_01338">
    <property type="entry name" value="RuBisCO_L_type1"/>
    <property type="match status" value="1"/>
</dbReference>
<dbReference type="InterPro" id="IPR033966">
    <property type="entry name" value="RuBisCO"/>
</dbReference>
<dbReference type="InterPro" id="IPR020878">
    <property type="entry name" value="RuBisCo_large_chain_AS"/>
</dbReference>
<dbReference type="InterPro" id="IPR000685">
    <property type="entry name" value="RuBisCO_lsu_C"/>
</dbReference>
<dbReference type="InterPro" id="IPR036376">
    <property type="entry name" value="RuBisCO_lsu_C_sf"/>
</dbReference>
<dbReference type="InterPro" id="IPR017443">
    <property type="entry name" value="RuBisCO_lsu_fd_N"/>
</dbReference>
<dbReference type="InterPro" id="IPR036422">
    <property type="entry name" value="RuBisCO_lsu_N_sf"/>
</dbReference>
<dbReference type="InterPro" id="IPR020888">
    <property type="entry name" value="RuBisCO_lsuI"/>
</dbReference>
<dbReference type="NCBIfam" id="NF003252">
    <property type="entry name" value="PRK04208.1"/>
    <property type="match status" value="1"/>
</dbReference>
<dbReference type="PANTHER" id="PTHR42704">
    <property type="entry name" value="RIBULOSE BISPHOSPHATE CARBOXYLASE"/>
    <property type="match status" value="1"/>
</dbReference>
<dbReference type="PANTHER" id="PTHR42704:SF15">
    <property type="entry name" value="RIBULOSE BISPHOSPHATE CARBOXYLASE LARGE CHAIN"/>
    <property type="match status" value="1"/>
</dbReference>
<dbReference type="Pfam" id="PF00016">
    <property type="entry name" value="RuBisCO_large"/>
    <property type="match status" value="1"/>
</dbReference>
<dbReference type="Pfam" id="PF02788">
    <property type="entry name" value="RuBisCO_large_N"/>
    <property type="match status" value="1"/>
</dbReference>
<dbReference type="SFLD" id="SFLDG01052">
    <property type="entry name" value="RuBisCO"/>
    <property type="match status" value="1"/>
</dbReference>
<dbReference type="SFLD" id="SFLDS00014">
    <property type="entry name" value="RuBisCO"/>
    <property type="match status" value="1"/>
</dbReference>
<dbReference type="SFLD" id="SFLDG00301">
    <property type="entry name" value="RuBisCO-like_proteins"/>
    <property type="match status" value="1"/>
</dbReference>
<dbReference type="SUPFAM" id="SSF51649">
    <property type="entry name" value="RuBisCo, C-terminal domain"/>
    <property type="match status" value="1"/>
</dbReference>
<dbReference type="SUPFAM" id="SSF54966">
    <property type="entry name" value="RuBisCO, large subunit, small (N-terminal) domain"/>
    <property type="match status" value="1"/>
</dbReference>
<dbReference type="PROSITE" id="PS00157">
    <property type="entry name" value="RUBISCO_LARGE"/>
    <property type="match status" value="1"/>
</dbReference>
<keyword id="KW-0113">Calvin cycle</keyword>
<keyword id="KW-0120">Carbon dioxide fixation</keyword>
<keyword id="KW-0150">Chloroplast</keyword>
<keyword id="KW-1015">Disulfide bond</keyword>
<keyword id="KW-0456">Lyase</keyword>
<keyword id="KW-0460">Magnesium</keyword>
<keyword id="KW-0479">Metal-binding</keyword>
<keyword id="KW-0488">Methylation</keyword>
<keyword id="KW-0503">Monooxygenase</keyword>
<keyword id="KW-0560">Oxidoreductase</keyword>
<keyword id="KW-0601">Photorespiration</keyword>
<keyword id="KW-0602">Photosynthesis</keyword>
<keyword id="KW-0934">Plastid</keyword>
<geneLocation type="chloroplast"/>
<proteinExistence type="inferred from homology"/>
<feature type="chain" id="PRO_0000062481" description="Ribulose bisphosphate carboxylase large chain">
    <location>
        <begin position="1" status="less than"/>
        <end position="458" status="greater than"/>
    </location>
</feature>
<feature type="active site" description="Proton acceptor" evidence="1">
    <location>
        <position position="168"/>
    </location>
</feature>
<feature type="active site" description="Proton acceptor" evidence="1">
    <location>
        <position position="287"/>
    </location>
</feature>
<feature type="binding site" description="in homodimeric partner" evidence="1">
    <location>
        <position position="116"/>
    </location>
    <ligand>
        <name>substrate</name>
    </ligand>
</feature>
<feature type="binding site" evidence="1">
    <location>
        <position position="166"/>
    </location>
    <ligand>
        <name>substrate</name>
    </ligand>
</feature>
<feature type="binding site" evidence="1">
    <location>
        <position position="170"/>
    </location>
    <ligand>
        <name>substrate</name>
    </ligand>
</feature>
<feature type="binding site" description="via carbamate group" evidence="1">
    <location>
        <position position="194"/>
    </location>
    <ligand>
        <name>Mg(2+)</name>
        <dbReference type="ChEBI" id="CHEBI:18420"/>
    </ligand>
</feature>
<feature type="binding site" evidence="1">
    <location>
        <position position="196"/>
    </location>
    <ligand>
        <name>Mg(2+)</name>
        <dbReference type="ChEBI" id="CHEBI:18420"/>
    </ligand>
</feature>
<feature type="binding site" evidence="1">
    <location>
        <position position="197"/>
    </location>
    <ligand>
        <name>Mg(2+)</name>
        <dbReference type="ChEBI" id="CHEBI:18420"/>
    </ligand>
</feature>
<feature type="binding site" evidence="1">
    <location>
        <position position="288"/>
    </location>
    <ligand>
        <name>substrate</name>
    </ligand>
</feature>
<feature type="binding site" evidence="1">
    <location>
        <position position="320"/>
    </location>
    <ligand>
        <name>substrate</name>
    </ligand>
</feature>
<feature type="binding site" evidence="1">
    <location>
        <position position="372"/>
    </location>
    <ligand>
        <name>substrate</name>
    </ligand>
</feature>
<feature type="site" description="Transition state stabilizer" evidence="1">
    <location>
        <position position="327"/>
    </location>
</feature>
<feature type="modified residue" description="N6,N6,N6-trimethyllysine" evidence="1">
    <location>
        <position position="7"/>
    </location>
</feature>
<feature type="modified residue" description="N6-carboxylysine" evidence="1">
    <location>
        <position position="194"/>
    </location>
</feature>
<feature type="disulfide bond" description="Interchain; in linked form" evidence="1">
    <location>
        <position position="240"/>
    </location>
</feature>
<feature type="non-terminal residue">
    <location>
        <position position="1"/>
    </location>
</feature>
<feature type="non-terminal residue">
    <location>
        <position position="458"/>
    </location>
</feature>